<feature type="chain" id="PRO_1000085846" description="Type III pantothenate kinase">
    <location>
        <begin position="1"/>
        <end position="262"/>
    </location>
</feature>
<feature type="active site" description="Proton acceptor" evidence="1">
    <location>
        <position position="109"/>
    </location>
</feature>
<feature type="binding site" evidence="1">
    <location>
        <begin position="6"/>
        <end position="13"/>
    </location>
    <ligand>
        <name>ATP</name>
        <dbReference type="ChEBI" id="CHEBI:30616"/>
    </ligand>
</feature>
<feature type="binding site" evidence="1">
    <location>
        <position position="100"/>
    </location>
    <ligand>
        <name>substrate</name>
    </ligand>
</feature>
<feature type="binding site" evidence="1">
    <location>
        <begin position="107"/>
        <end position="110"/>
    </location>
    <ligand>
        <name>substrate</name>
    </ligand>
</feature>
<feature type="binding site" evidence="1">
    <location>
        <position position="129"/>
    </location>
    <ligand>
        <name>K(+)</name>
        <dbReference type="ChEBI" id="CHEBI:29103"/>
    </ligand>
</feature>
<feature type="binding site" evidence="1">
    <location>
        <position position="132"/>
    </location>
    <ligand>
        <name>ATP</name>
        <dbReference type="ChEBI" id="CHEBI:30616"/>
    </ligand>
</feature>
<feature type="binding site" evidence="1">
    <location>
        <position position="184"/>
    </location>
    <ligand>
        <name>substrate</name>
    </ligand>
</feature>
<comment type="function">
    <text evidence="1">Catalyzes the phosphorylation of pantothenate (Pan), the first step in CoA biosynthesis.</text>
</comment>
<comment type="catalytic activity">
    <reaction evidence="1">
        <text>(R)-pantothenate + ATP = (R)-4'-phosphopantothenate + ADP + H(+)</text>
        <dbReference type="Rhea" id="RHEA:16373"/>
        <dbReference type="ChEBI" id="CHEBI:10986"/>
        <dbReference type="ChEBI" id="CHEBI:15378"/>
        <dbReference type="ChEBI" id="CHEBI:29032"/>
        <dbReference type="ChEBI" id="CHEBI:30616"/>
        <dbReference type="ChEBI" id="CHEBI:456216"/>
        <dbReference type="EC" id="2.7.1.33"/>
    </reaction>
</comment>
<comment type="cofactor">
    <cofactor evidence="1">
        <name>NH4(+)</name>
        <dbReference type="ChEBI" id="CHEBI:28938"/>
    </cofactor>
    <cofactor evidence="1">
        <name>K(+)</name>
        <dbReference type="ChEBI" id="CHEBI:29103"/>
    </cofactor>
    <text evidence="1">A monovalent cation. Ammonium or potassium.</text>
</comment>
<comment type="pathway">
    <text evidence="1">Cofactor biosynthesis; coenzyme A biosynthesis; CoA from (R)-pantothenate: step 1/5.</text>
</comment>
<comment type="subunit">
    <text evidence="1">Homodimer.</text>
</comment>
<comment type="subcellular location">
    <subcellularLocation>
        <location evidence="1">Cytoplasm</location>
    </subcellularLocation>
</comment>
<comment type="similarity">
    <text evidence="1">Belongs to the type III pantothenate kinase family.</text>
</comment>
<keyword id="KW-0067">ATP-binding</keyword>
<keyword id="KW-0173">Coenzyme A biosynthesis</keyword>
<keyword id="KW-0963">Cytoplasm</keyword>
<keyword id="KW-0418">Kinase</keyword>
<keyword id="KW-0479">Metal-binding</keyword>
<keyword id="KW-0547">Nucleotide-binding</keyword>
<keyword id="KW-0630">Potassium</keyword>
<keyword id="KW-0808">Transferase</keyword>
<reference key="1">
    <citation type="journal article" date="2008" name="Chem. Biol. Interact.">
        <title>Extending the Bacillus cereus group genomics to putative food-borne pathogens of different toxicity.</title>
        <authorList>
            <person name="Lapidus A."/>
            <person name="Goltsman E."/>
            <person name="Auger S."/>
            <person name="Galleron N."/>
            <person name="Segurens B."/>
            <person name="Dossat C."/>
            <person name="Land M.L."/>
            <person name="Broussolle V."/>
            <person name="Brillard J."/>
            <person name="Guinebretiere M.-H."/>
            <person name="Sanchis V."/>
            <person name="Nguen-the C."/>
            <person name="Lereclus D."/>
            <person name="Richardson P."/>
            <person name="Wincker P."/>
            <person name="Weissenbach J."/>
            <person name="Ehrlich S.D."/>
            <person name="Sorokin A."/>
        </authorList>
    </citation>
    <scope>NUCLEOTIDE SEQUENCE [LARGE SCALE GENOMIC DNA]</scope>
    <source>
        <strain>DSM 22905 / CIP 110041 / 391-98 / NVH 391-98</strain>
    </source>
</reference>
<sequence length="262" mass="28955">MIFVLDVGNTNAVLGVFEEGKLCQHWRMETDRHKTEDEYGMLIKQLLEHEGLSFGDIKGIIVSSVVPPIMFALERMCEKYFKIKPLVVGPGIKTGLNIKYENPREVGADRIVNAVAGIQLYGSPLIIVDFGTATTYCYINEEKHYMGGVITPGIMISAEALYSRAAKLPRIEITKPSSIVGKNTVSAMQAGILYGYVGQVEGIVKRMKEEAKQEPTVIATGGLAKLIAEESNVIDIVDPFLTLKGLYMLYERNAILQHEKGE</sequence>
<proteinExistence type="inferred from homology"/>
<organism>
    <name type="scientific">Bacillus cytotoxicus (strain DSM 22905 / CIP 110041 / 391-98 / NVH 391-98)</name>
    <dbReference type="NCBI Taxonomy" id="315749"/>
    <lineage>
        <taxon>Bacteria</taxon>
        <taxon>Bacillati</taxon>
        <taxon>Bacillota</taxon>
        <taxon>Bacilli</taxon>
        <taxon>Bacillales</taxon>
        <taxon>Bacillaceae</taxon>
        <taxon>Bacillus</taxon>
        <taxon>Bacillus cereus group</taxon>
    </lineage>
</organism>
<protein>
    <recommendedName>
        <fullName evidence="1">Type III pantothenate kinase</fullName>
        <ecNumber evidence="1">2.7.1.33</ecNumber>
    </recommendedName>
    <alternativeName>
        <fullName evidence="1">PanK-III</fullName>
    </alternativeName>
    <alternativeName>
        <fullName evidence="1">Pantothenic acid kinase</fullName>
    </alternativeName>
</protein>
<name>COAX_BACCN</name>
<dbReference type="EC" id="2.7.1.33" evidence="1"/>
<dbReference type="EMBL" id="CP000764">
    <property type="protein sequence ID" value="ABS20436.1"/>
    <property type="molecule type" value="Genomic_DNA"/>
</dbReference>
<dbReference type="RefSeq" id="WP_011983205.1">
    <property type="nucleotide sequence ID" value="NC_009674.1"/>
</dbReference>
<dbReference type="SMR" id="A7GJX8"/>
<dbReference type="STRING" id="315749.Bcer98_0061"/>
<dbReference type="GeneID" id="33895367"/>
<dbReference type="KEGG" id="bcy:Bcer98_0061"/>
<dbReference type="eggNOG" id="COG1521">
    <property type="taxonomic scope" value="Bacteria"/>
</dbReference>
<dbReference type="HOGENOM" id="CLU_066627_1_0_9"/>
<dbReference type="OrthoDB" id="9804707at2"/>
<dbReference type="UniPathway" id="UPA00241">
    <property type="reaction ID" value="UER00352"/>
</dbReference>
<dbReference type="Proteomes" id="UP000002300">
    <property type="component" value="Chromosome"/>
</dbReference>
<dbReference type="GO" id="GO:0005737">
    <property type="term" value="C:cytoplasm"/>
    <property type="evidence" value="ECO:0007669"/>
    <property type="project" value="UniProtKB-SubCell"/>
</dbReference>
<dbReference type="GO" id="GO:0005524">
    <property type="term" value="F:ATP binding"/>
    <property type="evidence" value="ECO:0007669"/>
    <property type="project" value="UniProtKB-UniRule"/>
</dbReference>
<dbReference type="GO" id="GO:0046872">
    <property type="term" value="F:metal ion binding"/>
    <property type="evidence" value="ECO:0007669"/>
    <property type="project" value="UniProtKB-KW"/>
</dbReference>
<dbReference type="GO" id="GO:0004594">
    <property type="term" value="F:pantothenate kinase activity"/>
    <property type="evidence" value="ECO:0007669"/>
    <property type="project" value="UniProtKB-UniRule"/>
</dbReference>
<dbReference type="GO" id="GO:0015937">
    <property type="term" value="P:coenzyme A biosynthetic process"/>
    <property type="evidence" value="ECO:0007669"/>
    <property type="project" value="UniProtKB-UniRule"/>
</dbReference>
<dbReference type="CDD" id="cd24015">
    <property type="entry name" value="ASKHA_NBD_PanK-III"/>
    <property type="match status" value="1"/>
</dbReference>
<dbReference type="Gene3D" id="3.30.420.40">
    <property type="match status" value="2"/>
</dbReference>
<dbReference type="HAMAP" id="MF_01274">
    <property type="entry name" value="Pantothen_kinase_3"/>
    <property type="match status" value="1"/>
</dbReference>
<dbReference type="InterPro" id="IPR043129">
    <property type="entry name" value="ATPase_NBD"/>
</dbReference>
<dbReference type="InterPro" id="IPR004619">
    <property type="entry name" value="Type_III_PanK"/>
</dbReference>
<dbReference type="NCBIfam" id="TIGR00671">
    <property type="entry name" value="baf"/>
    <property type="match status" value="1"/>
</dbReference>
<dbReference type="NCBIfam" id="NF009843">
    <property type="entry name" value="PRK13318.1-1"/>
    <property type="match status" value="1"/>
</dbReference>
<dbReference type="NCBIfam" id="NF009847">
    <property type="entry name" value="PRK13318.1-5"/>
    <property type="match status" value="1"/>
</dbReference>
<dbReference type="NCBIfam" id="NF009848">
    <property type="entry name" value="PRK13318.1-6"/>
    <property type="match status" value="1"/>
</dbReference>
<dbReference type="NCBIfam" id="NF009855">
    <property type="entry name" value="PRK13321.1"/>
    <property type="match status" value="1"/>
</dbReference>
<dbReference type="PANTHER" id="PTHR34265">
    <property type="entry name" value="TYPE III PANTOTHENATE KINASE"/>
    <property type="match status" value="1"/>
</dbReference>
<dbReference type="PANTHER" id="PTHR34265:SF1">
    <property type="entry name" value="TYPE III PANTOTHENATE KINASE"/>
    <property type="match status" value="1"/>
</dbReference>
<dbReference type="Pfam" id="PF03309">
    <property type="entry name" value="Pan_kinase"/>
    <property type="match status" value="1"/>
</dbReference>
<dbReference type="SUPFAM" id="SSF53067">
    <property type="entry name" value="Actin-like ATPase domain"/>
    <property type="match status" value="2"/>
</dbReference>
<accession>A7GJX8</accession>
<evidence type="ECO:0000255" key="1">
    <source>
        <dbReference type="HAMAP-Rule" id="MF_01274"/>
    </source>
</evidence>
<gene>
    <name evidence="1" type="primary">coaX</name>
    <name type="ordered locus">Bcer98_0061</name>
</gene>